<organism>
    <name type="scientific">Escherichia coli O45:K1 (strain S88 / ExPEC)</name>
    <dbReference type="NCBI Taxonomy" id="585035"/>
    <lineage>
        <taxon>Bacteria</taxon>
        <taxon>Pseudomonadati</taxon>
        <taxon>Pseudomonadota</taxon>
        <taxon>Gammaproteobacteria</taxon>
        <taxon>Enterobacterales</taxon>
        <taxon>Enterobacteriaceae</taxon>
        <taxon>Escherichia</taxon>
    </lineage>
</organism>
<feature type="chain" id="PRO_1000198004" description="Queuine tRNA-ribosyltransferase">
    <location>
        <begin position="1"/>
        <end position="375"/>
    </location>
</feature>
<feature type="region of interest" description="RNA binding" evidence="1">
    <location>
        <begin position="245"/>
        <end position="251"/>
    </location>
</feature>
<feature type="region of interest" description="RNA binding; important for wobble base 34 recognition" evidence="1">
    <location>
        <begin position="269"/>
        <end position="273"/>
    </location>
</feature>
<feature type="active site" description="Proton acceptor" evidence="1">
    <location>
        <position position="89"/>
    </location>
</feature>
<feature type="active site" description="Nucleophile" evidence="1">
    <location>
        <position position="264"/>
    </location>
</feature>
<feature type="binding site" evidence="1">
    <location>
        <begin position="89"/>
        <end position="93"/>
    </location>
    <ligand>
        <name>substrate</name>
    </ligand>
</feature>
<feature type="binding site" evidence="1">
    <location>
        <position position="143"/>
    </location>
    <ligand>
        <name>substrate</name>
    </ligand>
</feature>
<feature type="binding site" evidence="1">
    <location>
        <position position="187"/>
    </location>
    <ligand>
        <name>substrate</name>
    </ligand>
</feature>
<feature type="binding site" evidence="1">
    <location>
        <position position="214"/>
    </location>
    <ligand>
        <name>substrate</name>
    </ligand>
</feature>
<feature type="binding site" evidence="1">
    <location>
        <position position="302"/>
    </location>
    <ligand>
        <name>Zn(2+)</name>
        <dbReference type="ChEBI" id="CHEBI:29105"/>
    </ligand>
</feature>
<feature type="binding site" evidence="1">
    <location>
        <position position="304"/>
    </location>
    <ligand>
        <name>Zn(2+)</name>
        <dbReference type="ChEBI" id="CHEBI:29105"/>
    </ligand>
</feature>
<feature type="binding site" evidence="1">
    <location>
        <position position="307"/>
    </location>
    <ligand>
        <name>Zn(2+)</name>
        <dbReference type="ChEBI" id="CHEBI:29105"/>
    </ligand>
</feature>
<feature type="binding site" evidence="1">
    <location>
        <position position="333"/>
    </location>
    <ligand>
        <name>Zn(2+)</name>
        <dbReference type="ChEBI" id="CHEBI:29105"/>
    </ligand>
</feature>
<proteinExistence type="inferred from homology"/>
<accession>B7MD64</accession>
<dbReference type="EC" id="2.4.2.29" evidence="1"/>
<dbReference type="EMBL" id="CU928161">
    <property type="protein sequence ID" value="CAR01749.1"/>
    <property type="molecule type" value="Genomic_DNA"/>
</dbReference>
<dbReference type="RefSeq" id="WP_000667319.1">
    <property type="nucleotide sequence ID" value="NC_011742.1"/>
</dbReference>
<dbReference type="SMR" id="B7MD64"/>
<dbReference type="GeneID" id="93777054"/>
<dbReference type="KEGG" id="ecz:ECS88_0401"/>
<dbReference type="HOGENOM" id="CLU_022060_0_1_6"/>
<dbReference type="UniPathway" id="UPA00392"/>
<dbReference type="Proteomes" id="UP000000747">
    <property type="component" value="Chromosome"/>
</dbReference>
<dbReference type="GO" id="GO:0005829">
    <property type="term" value="C:cytosol"/>
    <property type="evidence" value="ECO:0007669"/>
    <property type="project" value="TreeGrafter"/>
</dbReference>
<dbReference type="GO" id="GO:0046872">
    <property type="term" value="F:metal ion binding"/>
    <property type="evidence" value="ECO:0007669"/>
    <property type="project" value="UniProtKB-KW"/>
</dbReference>
<dbReference type="GO" id="GO:0008479">
    <property type="term" value="F:tRNA-guanosine(34) queuine transglycosylase activity"/>
    <property type="evidence" value="ECO:0007669"/>
    <property type="project" value="UniProtKB-UniRule"/>
</dbReference>
<dbReference type="GO" id="GO:0008616">
    <property type="term" value="P:queuosine biosynthetic process"/>
    <property type="evidence" value="ECO:0007669"/>
    <property type="project" value="UniProtKB-UniRule"/>
</dbReference>
<dbReference type="GO" id="GO:0002099">
    <property type="term" value="P:tRNA wobble guanine modification"/>
    <property type="evidence" value="ECO:0007669"/>
    <property type="project" value="TreeGrafter"/>
</dbReference>
<dbReference type="GO" id="GO:0101030">
    <property type="term" value="P:tRNA-guanine transglycosylation"/>
    <property type="evidence" value="ECO:0007669"/>
    <property type="project" value="InterPro"/>
</dbReference>
<dbReference type="FunFam" id="3.20.20.105:FF:000001">
    <property type="entry name" value="Queuine tRNA-ribosyltransferase"/>
    <property type="match status" value="1"/>
</dbReference>
<dbReference type="Gene3D" id="3.20.20.105">
    <property type="entry name" value="Queuine tRNA-ribosyltransferase-like"/>
    <property type="match status" value="1"/>
</dbReference>
<dbReference type="HAMAP" id="MF_00168">
    <property type="entry name" value="Q_tRNA_Tgt"/>
    <property type="match status" value="1"/>
</dbReference>
<dbReference type="InterPro" id="IPR050076">
    <property type="entry name" value="ArchSynthase1/Queuine_TRR"/>
</dbReference>
<dbReference type="InterPro" id="IPR004803">
    <property type="entry name" value="TGT"/>
</dbReference>
<dbReference type="InterPro" id="IPR036511">
    <property type="entry name" value="TGT-like_sf"/>
</dbReference>
<dbReference type="InterPro" id="IPR002616">
    <property type="entry name" value="tRNA_ribo_trans-like"/>
</dbReference>
<dbReference type="NCBIfam" id="TIGR00430">
    <property type="entry name" value="Q_tRNA_tgt"/>
    <property type="match status" value="1"/>
</dbReference>
<dbReference type="NCBIfam" id="TIGR00449">
    <property type="entry name" value="tgt_general"/>
    <property type="match status" value="1"/>
</dbReference>
<dbReference type="PANTHER" id="PTHR46499">
    <property type="entry name" value="QUEUINE TRNA-RIBOSYLTRANSFERASE"/>
    <property type="match status" value="1"/>
</dbReference>
<dbReference type="PANTHER" id="PTHR46499:SF1">
    <property type="entry name" value="QUEUINE TRNA-RIBOSYLTRANSFERASE"/>
    <property type="match status" value="1"/>
</dbReference>
<dbReference type="Pfam" id="PF01702">
    <property type="entry name" value="TGT"/>
    <property type="match status" value="1"/>
</dbReference>
<dbReference type="SUPFAM" id="SSF51713">
    <property type="entry name" value="tRNA-guanine transglycosylase"/>
    <property type="match status" value="1"/>
</dbReference>
<gene>
    <name evidence="1" type="primary">tgt</name>
    <name type="ordered locus">ECS88_0401</name>
</gene>
<sequence>MKFELDTTDGRARRGRLVFDRGVVETPCFMPVGTYGTVKGMTPEEVEATGAQIILGNTFHLWLRPGQEIMKLHGDLHDFMQWKGPILTDSGGFQVFSLGDIRKITEQGVHFRNPINGDPIFLDPEKSMEIQYDLGSDIVMIFDECTPYPADWDYAKRSMEMSLRWAKRSRERFDSLGNKNALFGIIQGSVYEDLRDISVKGLVDIGFDGYAVGGLAVGEPKADMHRILEHVCPQIPADKPRYLMGVGKPEDLVEGVRRGIDMFDCVMPTRNARNGHLFVTDGVVKIRNAKYKSDTGPLDPECDCYTCRNYSRAYLHHLDRCNEILGARLNTIHNLRYYQRLMAGLRKAIEEGKLESFVTDFYQRQGREVPPLNVD</sequence>
<protein>
    <recommendedName>
        <fullName evidence="1">Queuine tRNA-ribosyltransferase</fullName>
        <ecNumber evidence="1">2.4.2.29</ecNumber>
    </recommendedName>
    <alternativeName>
        <fullName evidence="1">Guanine insertion enzyme</fullName>
    </alternativeName>
    <alternativeName>
        <fullName evidence="1">tRNA-guanine transglycosylase</fullName>
    </alternativeName>
</protein>
<evidence type="ECO:0000255" key="1">
    <source>
        <dbReference type="HAMAP-Rule" id="MF_00168"/>
    </source>
</evidence>
<keyword id="KW-0328">Glycosyltransferase</keyword>
<keyword id="KW-0479">Metal-binding</keyword>
<keyword id="KW-0671">Queuosine biosynthesis</keyword>
<keyword id="KW-1185">Reference proteome</keyword>
<keyword id="KW-0808">Transferase</keyword>
<keyword id="KW-0819">tRNA processing</keyword>
<keyword id="KW-0862">Zinc</keyword>
<name>TGT_ECO45</name>
<reference key="1">
    <citation type="journal article" date="2009" name="PLoS Genet.">
        <title>Organised genome dynamics in the Escherichia coli species results in highly diverse adaptive paths.</title>
        <authorList>
            <person name="Touchon M."/>
            <person name="Hoede C."/>
            <person name="Tenaillon O."/>
            <person name="Barbe V."/>
            <person name="Baeriswyl S."/>
            <person name="Bidet P."/>
            <person name="Bingen E."/>
            <person name="Bonacorsi S."/>
            <person name="Bouchier C."/>
            <person name="Bouvet O."/>
            <person name="Calteau A."/>
            <person name="Chiapello H."/>
            <person name="Clermont O."/>
            <person name="Cruveiller S."/>
            <person name="Danchin A."/>
            <person name="Diard M."/>
            <person name="Dossat C."/>
            <person name="Karoui M.E."/>
            <person name="Frapy E."/>
            <person name="Garry L."/>
            <person name="Ghigo J.M."/>
            <person name="Gilles A.M."/>
            <person name="Johnson J."/>
            <person name="Le Bouguenec C."/>
            <person name="Lescat M."/>
            <person name="Mangenot S."/>
            <person name="Martinez-Jehanne V."/>
            <person name="Matic I."/>
            <person name="Nassif X."/>
            <person name="Oztas S."/>
            <person name="Petit M.A."/>
            <person name="Pichon C."/>
            <person name="Rouy Z."/>
            <person name="Ruf C.S."/>
            <person name="Schneider D."/>
            <person name="Tourret J."/>
            <person name="Vacherie B."/>
            <person name="Vallenet D."/>
            <person name="Medigue C."/>
            <person name="Rocha E.P.C."/>
            <person name="Denamur E."/>
        </authorList>
    </citation>
    <scope>NUCLEOTIDE SEQUENCE [LARGE SCALE GENOMIC DNA]</scope>
    <source>
        <strain>S88 / ExPEC</strain>
    </source>
</reference>
<comment type="function">
    <text evidence="1">Catalyzes the base-exchange of a guanine (G) residue with the queuine precursor 7-aminomethyl-7-deazaguanine (PreQ1) at position 34 (anticodon wobble position) in tRNAs with GU(N) anticodons (tRNA-Asp, -Asn, -His and -Tyr). Catalysis occurs through a double-displacement mechanism. The nucleophile active site attacks the C1' of nucleotide 34 to detach the guanine base from the RNA, forming a covalent enzyme-RNA intermediate. The proton acceptor active site deprotonates the incoming PreQ1, allowing a nucleophilic attack on the C1' of the ribose to form the product. After dissociation, two additional enzymatic reactions on the tRNA convert PreQ1 to queuine (Q), resulting in the hypermodified nucleoside queuosine (7-(((4,5-cis-dihydroxy-2-cyclopenten-1-yl)amino)methyl)-7-deazaguanosine).</text>
</comment>
<comment type="catalytic activity">
    <reaction evidence="1">
        <text>7-aminomethyl-7-carbaguanine + guanosine(34) in tRNA = 7-aminomethyl-7-carbaguanosine(34) in tRNA + guanine</text>
        <dbReference type="Rhea" id="RHEA:24104"/>
        <dbReference type="Rhea" id="RHEA-COMP:10341"/>
        <dbReference type="Rhea" id="RHEA-COMP:10342"/>
        <dbReference type="ChEBI" id="CHEBI:16235"/>
        <dbReference type="ChEBI" id="CHEBI:58703"/>
        <dbReference type="ChEBI" id="CHEBI:74269"/>
        <dbReference type="ChEBI" id="CHEBI:82833"/>
        <dbReference type="EC" id="2.4.2.29"/>
    </reaction>
</comment>
<comment type="cofactor">
    <cofactor evidence="1">
        <name>Zn(2+)</name>
        <dbReference type="ChEBI" id="CHEBI:29105"/>
    </cofactor>
    <text evidence="1">Binds 1 zinc ion per subunit.</text>
</comment>
<comment type="pathway">
    <text evidence="1">tRNA modification; tRNA-queuosine biosynthesis.</text>
</comment>
<comment type="subunit">
    <text evidence="1">Homodimer. Within each dimer, one monomer is responsible for RNA recognition and catalysis, while the other monomer binds to the replacement base PreQ1.</text>
</comment>
<comment type="similarity">
    <text evidence="1">Belongs to the queuine tRNA-ribosyltransferase family.</text>
</comment>